<reference key="1">
    <citation type="journal article" date="2005" name="J. Gen. Virol.">
        <title>Genomic RNA sequence of Feline coronavirus strain FIPV WSU-79/1146.</title>
        <authorList>
            <person name="Dye C."/>
            <person name="Siddell S.G."/>
        </authorList>
    </citation>
    <scope>NUCLEOTIDE SEQUENCE [GENOMIC RNA]</scope>
</reference>
<reference key="2">
    <citation type="submission" date="2005-03" db="EMBL/GenBank/DDBJ databases">
        <authorList>
            <person name="Haijema B.J."/>
            <person name="de Groot-Mijnes J.D.F."/>
            <person name="Vennema H."/>
            <person name="Raamsman M.J."/>
            <person name="Rottier P.J.M."/>
            <person name="de Groot R.J."/>
        </authorList>
    </citation>
    <scope>NUCLEOTIDE SEQUENCE [GENOMIC RNA]</scope>
</reference>
<organism>
    <name type="scientific">Feline coronavirus (strain FIPV WSU-79/1146)</name>
    <name type="common">FCoV</name>
    <dbReference type="NCBI Taxonomy" id="33734"/>
    <lineage>
        <taxon>Viruses</taxon>
        <taxon>Riboviria</taxon>
        <taxon>Orthornavirae</taxon>
        <taxon>Pisuviricota</taxon>
        <taxon>Pisoniviricetes</taxon>
        <taxon>Nidovirales</taxon>
        <taxon>Cornidovirineae</taxon>
        <taxon>Coronaviridae</taxon>
        <taxon>Orthocoronavirinae</taxon>
        <taxon>Alphacoronavirus</taxon>
        <taxon>Tegacovirus</taxon>
        <taxon>Alphacoronavirus 1</taxon>
    </lineage>
</organism>
<proteinExistence type="inferred from homology"/>
<comment type="function">
    <text evidence="1">Plays a central role in virus morphogenesis and assembly. Acts as a viroporin and self-assembles in host membranes forming pentameric protein-lipid pores that allow ion transport. Also plays a role in the induction of apoptosis.</text>
</comment>
<comment type="subunit">
    <text evidence="1">Homopentamer. Interacts with membrane protein M in the budding compartment of the host cell, which is located between endoplasmic reticulum and the Golgi complex. Interacts with Nucleoprotein.</text>
</comment>
<comment type="subcellular location">
    <subcellularLocation>
        <location evidence="1">Host Golgi apparatus membrane</location>
        <topology evidence="1">Single-pass type III membrane protein</topology>
    </subcellularLocation>
    <text evidence="1">The cytoplasmic tail functions as a Golgi complex-targeting signal.</text>
</comment>
<comment type="similarity">
    <text evidence="1">Belongs to the alphacoronaviruses E protein family.</text>
</comment>
<sequence length="82" mass="9370">MTFPRAFTIIDDHGMVVSVFFWLLLIIILILFSIALLNVIKLCMVCCNLGKTIIVLPARHAYDAYKTFMQTKAYNPDEAFLV</sequence>
<protein>
    <recommendedName>
        <fullName evidence="1">Envelope small membrane protein</fullName>
        <shortName evidence="1">E protein</shortName>
        <shortName evidence="1">sM protein</shortName>
    </recommendedName>
</protein>
<gene>
    <name evidence="1" type="primary">E</name>
    <name type="synonym">sM</name>
</gene>
<dbReference type="EMBL" id="DQ010921">
    <property type="protein sequence ID" value="AAY32597.1"/>
    <property type="molecule type" value="Genomic_RNA"/>
</dbReference>
<dbReference type="EMBL" id="AY994055">
    <property type="protein sequence ID" value="AAY16378.1"/>
    <property type="molecule type" value="Genomic_RNA"/>
</dbReference>
<dbReference type="RefSeq" id="YP_004070197.1">
    <property type="nucleotide sequence ID" value="NC_002306.3"/>
</dbReference>
<dbReference type="SMR" id="Q52PA5"/>
<dbReference type="TCDB" id="1.A.65.1.3">
    <property type="family name" value="the coronavirus viroporin e protein (viroporin e) family"/>
</dbReference>
<dbReference type="GeneID" id="10040184"/>
<dbReference type="KEGG" id="vg:10040184"/>
<dbReference type="Proteomes" id="UP000000835">
    <property type="component" value="Segment"/>
</dbReference>
<dbReference type="Proteomes" id="UP000140386">
    <property type="component" value="Genome"/>
</dbReference>
<dbReference type="GO" id="GO:0044178">
    <property type="term" value="C:host cell Golgi membrane"/>
    <property type="evidence" value="ECO:0007669"/>
    <property type="project" value="UniProtKB-SubCell"/>
</dbReference>
<dbReference type="GO" id="GO:0016020">
    <property type="term" value="C:membrane"/>
    <property type="evidence" value="ECO:0007669"/>
    <property type="project" value="UniProtKB-UniRule"/>
</dbReference>
<dbReference type="GO" id="GO:0140975">
    <property type="term" value="P:disruption of cellular anatomical structure in another organism"/>
    <property type="evidence" value="ECO:0007669"/>
    <property type="project" value="UniProtKB-UniRule"/>
</dbReference>
<dbReference type="GO" id="GO:0046760">
    <property type="term" value="P:viral budding from Golgi membrane"/>
    <property type="evidence" value="ECO:0007669"/>
    <property type="project" value="UniProtKB-UniRule"/>
</dbReference>
<dbReference type="HAMAP" id="MF_04205">
    <property type="entry name" value="ALPHA_CORONA_E"/>
    <property type="match status" value="1"/>
</dbReference>
<dbReference type="InterPro" id="IPR043507">
    <property type="entry name" value="E_protein_aCoV"/>
</dbReference>
<dbReference type="InterPro" id="IPR003873">
    <property type="entry name" value="E_protein_CoV"/>
</dbReference>
<dbReference type="Pfam" id="PF02723">
    <property type="entry name" value="CoV_E"/>
    <property type="match status" value="1"/>
</dbReference>
<dbReference type="PROSITE" id="PS51926">
    <property type="entry name" value="COV_E"/>
    <property type="match status" value="1"/>
</dbReference>
<keyword id="KW-0053">Apoptosis</keyword>
<keyword id="KW-1040">Host Golgi apparatus</keyword>
<keyword id="KW-1043">Host membrane</keyword>
<keyword id="KW-0472">Membrane</keyword>
<keyword id="KW-1185">Reference proteome</keyword>
<keyword id="KW-0812">Transmembrane</keyword>
<keyword id="KW-1133">Transmembrane helix</keyword>
<name>VEMP_FIPV</name>
<evidence type="ECO:0000255" key="1">
    <source>
        <dbReference type="HAMAP-Rule" id="MF_04205"/>
    </source>
</evidence>
<accession>Q52PA5</accession>
<accession>Q4U5F9</accession>
<organismHost>
    <name type="scientific">Felidae</name>
    <name type="common">cat family</name>
    <dbReference type="NCBI Taxonomy" id="9681"/>
</organismHost>
<feature type="chain" id="PRO_0000283978" description="Envelope small membrane protein">
    <location>
        <begin position="1"/>
        <end position="82"/>
    </location>
</feature>
<feature type="topological domain" description="Virion surface" evidence="1">
    <location>
        <begin position="1"/>
        <end position="19"/>
    </location>
</feature>
<feature type="transmembrane region" description="Helical" evidence="1">
    <location>
        <begin position="20"/>
        <end position="40"/>
    </location>
</feature>
<feature type="topological domain" description="Intravirion" evidence="1">
    <location>
        <begin position="41"/>
        <end position="82"/>
    </location>
</feature>